<name>CYB_PERLO</name>
<accession>Q508J5</accession>
<sequence length="379" mass="42948">MTIMRKTHPLMKMVNHAFIDLPTPPNISGWWNFGSLLGLCLIIQILTGLFLSMHYTPDTLTAFSSVAHICRDVNYGWLIRYMHANGASLFFICLYFHIGRGIYYGSYMYKETWNIGIVLLFLVMATAFMGYVLPWGQMSFWGATVITNLLSAIPYIGSDLVEWIWGGFSVDKATLNRFFAFHFILPFIIAAMAMVHLLFLHETGSNNPLGIPSDSDKIPFHPYYSYKDLLGGAALLAFFFTIVLFFPDALGDPDNYTPANPLNTPPHIKPEWYFLFAYAILRSIPNKLGGVIALVLSILVLALFPFLHTSNQRSLTFRPISQTLFWILVSDLFILTWIGGQPVEPPFIIIGQIASILYFTIILILFPIAGMIENKMLKW</sequence>
<keyword id="KW-0249">Electron transport</keyword>
<keyword id="KW-0349">Heme</keyword>
<keyword id="KW-0408">Iron</keyword>
<keyword id="KW-0472">Membrane</keyword>
<keyword id="KW-0479">Metal-binding</keyword>
<keyword id="KW-0496">Mitochondrion</keyword>
<keyword id="KW-0999">Mitochondrion inner membrane</keyword>
<keyword id="KW-0679">Respiratory chain</keyword>
<keyword id="KW-0812">Transmembrane</keyword>
<keyword id="KW-1133">Transmembrane helix</keyword>
<keyword id="KW-0813">Transport</keyword>
<keyword id="KW-0830">Ubiquinone</keyword>
<comment type="function">
    <text evidence="2">Component of the ubiquinol-cytochrome c reductase complex (complex III or cytochrome b-c1 complex) that is part of the mitochondrial respiratory chain. The b-c1 complex mediates electron transfer from ubiquinol to cytochrome c. Contributes to the generation of a proton gradient across the mitochondrial membrane that is then used for ATP synthesis.</text>
</comment>
<comment type="cofactor">
    <cofactor evidence="2">
        <name>heme b</name>
        <dbReference type="ChEBI" id="CHEBI:60344"/>
    </cofactor>
    <text evidence="2">Binds 2 heme b groups non-covalently.</text>
</comment>
<comment type="subunit">
    <text evidence="2">The cytochrome bc1 complex contains 11 subunits: 3 respiratory subunits (MT-CYB, CYC1 and UQCRFS1), 2 core proteins (UQCRC1 and UQCRC2) and 6 low-molecular weight proteins (UQCRH/QCR6, UQCRB/QCR7, UQCRQ/QCR8, UQCR10/QCR9, UQCR11/QCR10 and a cleavage product of UQCRFS1). This cytochrome bc1 complex then forms a dimer.</text>
</comment>
<comment type="subcellular location">
    <subcellularLocation>
        <location evidence="2">Mitochondrion inner membrane</location>
        <topology evidence="2">Multi-pass membrane protein</topology>
    </subcellularLocation>
</comment>
<comment type="miscellaneous">
    <text evidence="1">Heme 1 (or BL or b562) is low-potential and absorbs at about 562 nm, and heme 2 (or BH or b566) is high-potential and absorbs at about 566 nm.</text>
</comment>
<comment type="similarity">
    <text evidence="3 4">Belongs to the cytochrome b family.</text>
</comment>
<comment type="caution">
    <text evidence="2">The full-length protein contains only eight transmembrane helices, not nine as predicted by bioinformatics tools.</text>
</comment>
<gene>
    <name type="primary">MT-CYB</name>
    <name type="synonym">COB</name>
    <name type="synonym">CYTB</name>
    <name type="synonym">MTCYB</name>
</gene>
<feature type="chain" id="PRO_0000257931" description="Cytochrome b">
    <location>
        <begin position="1"/>
        <end position="379"/>
    </location>
</feature>
<feature type="transmembrane region" description="Helical" evidence="2">
    <location>
        <begin position="33"/>
        <end position="53"/>
    </location>
</feature>
<feature type="transmembrane region" description="Helical" evidence="2">
    <location>
        <begin position="77"/>
        <end position="98"/>
    </location>
</feature>
<feature type="transmembrane region" description="Helical" evidence="2">
    <location>
        <begin position="113"/>
        <end position="133"/>
    </location>
</feature>
<feature type="transmembrane region" description="Helical" evidence="2">
    <location>
        <begin position="178"/>
        <end position="198"/>
    </location>
</feature>
<feature type="transmembrane region" description="Helical" evidence="2">
    <location>
        <begin position="226"/>
        <end position="246"/>
    </location>
</feature>
<feature type="transmembrane region" description="Helical" evidence="2">
    <location>
        <begin position="288"/>
        <end position="308"/>
    </location>
</feature>
<feature type="transmembrane region" description="Helical" evidence="2">
    <location>
        <begin position="320"/>
        <end position="340"/>
    </location>
</feature>
<feature type="transmembrane region" description="Helical" evidence="2">
    <location>
        <begin position="347"/>
        <end position="367"/>
    </location>
</feature>
<feature type="binding site" description="axial binding residue" evidence="2">
    <location>
        <position position="83"/>
    </location>
    <ligand>
        <name>heme b</name>
        <dbReference type="ChEBI" id="CHEBI:60344"/>
        <label>b562</label>
    </ligand>
    <ligandPart>
        <name>Fe</name>
        <dbReference type="ChEBI" id="CHEBI:18248"/>
    </ligandPart>
</feature>
<feature type="binding site" description="axial binding residue" evidence="2">
    <location>
        <position position="97"/>
    </location>
    <ligand>
        <name>heme b</name>
        <dbReference type="ChEBI" id="CHEBI:60344"/>
        <label>b566</label>
    </ligand>
    <ligandPart>
        <name>Fe</name>
        <dbReference type="ChEBI" id="CHEBI:18248"/>
    </ligandPart>
</feature>
<feature type="binding site" description="axial binding residue" evidence="2">
    <location>
        <position position="182"/>
    </location>
    <ligand>
        <name>heme b</name>
        <dbReference type="ChEBI" id="CHEBI:60344"/>
        <label>b562</label>
    </ligand>
    <ligandPart>
        <name>Fe</name>
        <dbReference type="ChEBI" id="CHEBI:18248"/>
    </ligandPart>
</feature>
<feature type="binding site" description="axial binding residue" evidence="2">
    <location>
        <position position="196"/>
    </location>
    <ligand>
        <name>heme b</name>
        <dbReference type="ChEBI" id="CHEBI:60344"/>
        <label>b566</label>
    </ligand>
    <ligandPart>
        <name>Fe</name>
        <dbReference type="ChEBI" id="CHEBI:18248"/>
    </ligandPart>
</feature>
<feature type="binding site" evidence="2">
    <location>
        <position position="201"/>
    </location>
    <ligand>
        <name>a ubiquinone</name>
        <dbReference type="ChEBI" id="CHEBI:16389"/>
    </ligand>
</feature>
<dbReference type="EMBL" id="AY926408">
    <property type="protein sequence ID" value="AAY23251.1"/>
    <property type="molecule type" value="Genomic_DNA"/>
</dbReference>
<dbReference type="SMR" id="Q508J5"/>
<dbReference type="GO" id="GO:0005743">
    <property type="term" value="C:mitochondrial inner membrane"/>
    <property type="evidence" value="ECO:0007669"/>
    <property type="project" value="UniProtKB-SubCell"/>
</dbReference>
<dbReference type="GO" id="GO:0045275">
    <property type="term" value="C:respiratory chain complex III"/>
    <property type="evidence" value="ECO:0007669"/>
    <property type="project" value="InterPro"/>
</dbReference>
<dbReference type="GO" id="GO:0046872">
    <property type="term" value="F:metal ion binding"/>
    <property type="evidence" value="ECO:0007669"/>
    <property type="project" value="UniProtKB-KW"/>
</dbReference>
<dbReference type="GO" id="GO:0008121">
    <property type="term" value="F:ubiquinol-cytochrome-c reductase activity"/>
    <property type="evidence" value="ECO:0007669"/>
    <property type="project" value="InterPro"/>
</dbReference>
<dbReference type="GO" id="GO:0006122">
    <property type="term" value="P:mitochondrial electron transport, ubiquinol to cytochrome c"/>
    <property type="evidence" value="ECO:0007669"/>
    <property type="project" value="TreeGrafter"/>
</dbReference>
<dbReference type="CDD" id="cd00290">
    <property type="entry name" value="cytochrome_b_C"/>
    <property type="match status" value="1"/>
</dbReference>
<dbReference type="CDD" id="cd00284">
    <property type="entry name" value="Cytochrome_b_N"/>
    <property type="match status" value="1"/>
</dbReference>
<dbReference type="FunFam" id="1.20.810.10:FF:000002">
    <property type="entry name" value="Cytochrome b"/>
    <property type="match status" value="1"/>
</dbReference>
<dbReference type="Gene3D" id="1.20.810.10">
    <property type="entry name" value="Cytochrome Bc1 Complex, Chain C"/>
    <property type="match status" value="1"/>
</dbReference>
<dbReference type="InterPro" id="IPR005798">
    <property type="entry name" value="Cyt_b/b6_C"/>
</dbReference>
<dbReference type="InterPro" id="IPR036150">
    <property type="entry name" value="Cyt_b/b6_C_sf"/>
</dbReference>
<dbReference type="InterPro" id="IPR005797">
    <property type="entry name" value="Cyt_b/b6_N"/>
</dbReference>
<dbReference type="InterPro" id="IPR027387">
    <property type="entry name" value="Cytb/b6-like_sf"/>
</dbReference>
<dbReference type="InterPro" id="IPR030689">
    <property type="entry name" value="Cytochrome_b"/>
</dbReference>
<dbReference type="InterPro" id="IPR048260">
    <property type="entry name" value="Cytochrome_b_C_euk/bac"/>
</dbReference>
<dbReference type="InterPro" id="IPR048259">
    <property type="entry name" value="Cytochrome_b_N_euk/bac"/>
</dbReference>
<dbReference type="InterPro" id="IPR016174">
    <property type="entry name" value="Di-haem_cyt_TM"/>
</dbReference>
<dbReference type="PANTHER" id="PTHR19271">
    <property type="entry name" value="CYTOCHROME B"/>
    <property type="match status" value="1"/>
</dbReference>
<dbReference type="PANTHER" id="PTHR19271:SF16">
    <property type="entry name" value="CYTOCHROME B"/>
    <property type="match status" value="1"/>
</dbReference>
<dbReference type="Pfam" id="PF00032">
    <property type="entry name" value="Cytochrom_B_C"/>
    <property type="match status" value="1"/>
</dbReference>
<dbReference type="Pfam" id="PF00033">
    <property type="entry name" value="Cytochrome_B"/>
    <property type="match status" value="1"/>
</dbReference>
<dbReference type="PIRSF" id="PIRSF038885">
    <property type="entry name" value="COB"/>
    <property type="match status" value="1"/>
</dbReference>
<dbReference type="SUPFAM" id="SSF81648">
    <property type="entry name" value="a domain/subunit of cytochrome bc1 complex (Ubiquinol-cytochrome c reductase)"/>
    <property type="match status" value="1"/>
</dbReference>
<dbReference type="SUPFAM" id="SSF81342">
    <property type="entry name" value="Transmembrane di-heme cytochromes"/>
    <property type="match status" value="1"/>
</dbReference>
<dbReference type="PROSITE" id="PS51003">
    <property type="entry name" value="CYTB_CTER"/>
    <property type="match status" value="1"/>
</dbReference>
<dbReference type="PROSITE" id="PS51002">
    <property type="entry name" value="CYTB_NTER"/>
    <property type="match status" value="1"/>
</dbReference>
<organism>
    <name type="scientific">Perognathus longimembris</name>
    <name type="common">Little pocket mouse</name>
    <name type="synonym">Otognosis longimembris</name>
    <dbReference type="NCBI Taxonomy" id="38669"/>
    <lineage>
        <taxon>Eukaryota</taxon>
        <taxon>Metazoa</taxon>
        <taxon>Chordata</taxon>
        <taxon>Craniata</taxon>
        <taxon>Vertebrata</taxon>
        <taxon>Euteleostomi</taxon>
        <taxon>Mammalia</taxon>
        <taxon>Eutheria</taxon>
        <taxon>Euarchontoglires</taxon>
        <taxon>Glires</taxon>
        <taxon>Rodentia</taxon>
        <taxon>Castorimorpha</taxon>
        <taxon>Heteromyidae</taxon>
        <taxon>Perognathinae</taxon>
        <taxon>Perognathus</taxon>
    </lineage>
</organism>
<reference key="1">
    <citation type="journal article" date="2005" name="J. Mammal.">
        <title>Phylogenetics of the new world rodent family Heteromyidae.</title>
        <authorList>
            <person name="Alexander L.F."/>
            <person name="Riddle B.R."/>
        </authorList>
    </citation>
    <scope>NUCLEOTIDE SEQUENCE [GENOMIC DNA]</scope>
    <source>
        <strain>Isolate LVT 2191</strain>
    </source>
</reference>
<geneLocation type="mitochondrion"/>
<proteinExistence type="inferred from homology"/>
<evidence type="ECO:0000250" key="1"/>
<evidence type="ECO:0000250" key="2">
    <source>
        <dbReference type="UniProtKB" id="P00157"/>
    </source>
</evidence>
<evidence type="ECO:0000255" key="3">
    <source>
        <dbReference type="PROSITE-ProRule" id="PRU00967"/>
    </source>
</evidence>
<evidence type="ECO:0000255" key="4">
    <source>
        <dbReference type="PROSITE-ProRule" id="PRU00968"/>
    </source>
</evidence>
<protein>
    <recommendedName>
        <fullName>Cytochrome b</fullName>
    </recommendedName>
    <alternativeName>
        <fullName>Complex III subunit 3</fullName>
    </alternativeName>
    <alternativeName>
        <fullName>Complex III subunit III</fullName>
    </alternativeName>
    <alternativeName>
        <fullName>Cytochrome b-c1 complex subunit 3</fullName>
    </alternativeName>
    <alternativeName>
        <fullName>Ubiquinol-cytochrome-c reductase complex cytochrome b subunit</fullName>
    </alternativeName>
</protein>